<keyword id="KW-0184">Conjugation</keyword>
<keyword id="KW-0614">Plasmid</keyword>
<gene>
    <name type="primary">traC</name>
</gene>
<organism>
    <name type="scientific">Rhizobium radiobacter</name>
    <name type="common">Agrobacterium tumefaciens</name>
    <name type="synonym">Agrobacterium radiobacter</name>
    <dbReference type="NCBI Taxonomy" id="358"/>
    <lineage>
        <taxon>Bacteria</taxon>
        <taxon>Pseudomonadati</taxon>
        <taxon>Pseudomonadota</taxon>
        <taxon>Alphaproteobacteria</taxon>
        <taxon>Hyphomicrobiales</taxon>
        <taxon>Rhizobiaceae</taxon>
        <taxon>Rhizobium/Agrobacterium group</taxon>
        <taxon>Agrobacterium</taxon>
        <taxon>Agrobacterium tumefaciens complex</taxon>
    </lineage>
</organism>
<proteinExistence type="predicted"/>
<dbReference type="EMBL" id="AF242881">
    <property type="protein sequence ID" value="AAC28115.1"/>
    <property type="molecule type" value="Genomic_DNA"/>
</dbReference>
<dbReference type="RefSeq" id="NP_059694.1">
    <property type="nucleotide sequence ID" value="NC_002377.1"/>
</dbReference>
<dbReference type="RefSeq" id="WP_010892382.1">
    <property type="nucleotide sequence ID" value="NZ_QSNU01000012.1"/>
</dbReference>
<dbReference type="SMR" id="Q44362"/>
<dbReference type="OrthoDB" id="7997694at2"/>
<dbReference type="InterPro" id="IPR053443">
    <property type="entry name" value="Conjugal_Transfer_TraC"/>
</dbReference>
<dbReference type="InterPro" id="IPR012930">
    <property type="entry name" value="TraC"/>
</dbReference>
<dbReference type="NCBIfam" id="NF043004">
    <property type="entry name" value="CjTranTraC_Agrob"/>
    <property type="match status" value="1"/>
</dbReference>
<dbReference type="NCBIfam" id="NF010422">
    <property type="entry name" value="PRK13848.1"/>
    <property type="match status" value="1"/>
</dbReference>
<dbReference type="Pfam" id="PF07820">
    <property type="entry name" value="TraC"/>
    <property type="match status" value="1"/>
</dbReference>
<evidence type="ECO:0000256" key="1">
    <source>
        <dbReference type="SAM" id="MobiDB-lite"/>
    </source>
</evidence>
<geneLocation type="plasmid">
    <name>pTiA6NC</name>
</geneLocation>
<name>TRAC_RHIRD</name>
<protein>
    <recommendedName>
        <fullName>Conjugal transfer protein TraC</fullName>
    </recommendedName>
</protein>
<sequence>MKKPSSKIREEIARLQDQLKQAETREAERIGRIALKAGLGDIEIDEAELQAAFEDVAKRFRGGKGSATGKRQAGDSRTGSEPYATQPTGADAGGLSEA</sequence>
<accession>Q44362</accession>
<feature type="chain" id="PRO_0000065600" description="Conjugal transfer protein TraC">
    <location>
        <begin position="1"/>
        <end position="98"/>
    </location>
</feature>
<feature type="region of interest" description="Disordered" evidence="1">
    <location>
        <begin position="60"/>
        <end position="98"/>
    </location>
</feature>
<feature type="compositionally biased region" description="Polar residues" evidence="1">
    <location>
        <begin position="75"/>
        <end position="88"/>
    </location>
</feature>
<reference key="1">
    <citation type="journal article" date="1996" name="J. Bacteriol.">
        <title>The conjugal transfer system of Agrobacterium tumefaciens octopine-type Ti plasmids is closely related to the transfer system of an IncP plasmid and distantly related to Ti plasmid vir genes.</title>
        <authorList>
            <person name="Alt-Morbe J."/>
            <person name="Stryker J.L."/>
            <person name="Fuqua C."/>
            <person name="Li P.L."/>
            <person name="Farrand S.K."/>
            <person name="Winans S.C."/>
        </authorList>
    </citation>
    <scope>NUCLEOTIDE SEQUENCE [GENOMIC DNA]</scope>
</reference>